<protein>
    <recommendedName>
        <fullName evidence="1">Adenylate kinase</fullName>
        <shortName evidence="1">AK</shortName>
        <ecNumber evidence="1">2.7.4.3</ecNumber>
    </recommendedName>
    <alternativeName>
        <fullName evidence="1">ATP-AMP transphosphorylase</fullName>
    </alternativeName>
    <alternativeName>
        <fullName evidence="1">ATP:AMP phosphotransferase</fullName>
    </alternativeName>
    <alternativeName>
        <fullName evidence="1">Adenylate monophosphate kinase</fullName>
    </alternativeName>
</protein>
<dbReference type="EC" id="2.7.4.3" evidence="1"/>
<dbReference type="EMBL" id="CP000950">
    <property type="protein sequence ID" value="ACA69463.1"/>
    <property type="molecule type" value="Genomic_DNA"/>
</dbReference>
<dbReference type="RefSeq" id="WP_002208600.1">
    <property type="nucleotide sequence ID" value="NZ_CP009792.1"/>
</dbReference>
<dbReference type="SMR" id="B1JHN1"/>
<dbReference type="GeneID" id="57975593"/>
<dbReference type="KEGG" id="ypy:YPK_3194"/>
<dbReference type="PATRIC" id="fig|502800.11.peg.3921"/>
<dbReference type="UniPathway" id="UPA00588">
    <property type="reaction ID" value="UER00649"/>
</dbReference>
<dbReference type="GO" id="GO:0005737">
    <property type="term" value="C:cytoplasm"/>
    <property type="evidence" value="ECO:0007669"/>
    <property type="project" value="UniProtKB-SubCell"/>
</dbReference>
<dbReference type="GO" id="GO:0004017">
    <property type="term" value="F:adenylate kinase activity"/>
    <property type="evidence" value="ECO:0007669"/>
    <property type="project" value="UniProtKB-UniRule"/>
</dbReference>
<dbReference type="GO" id="GO:0005524">
    <property type="term" value="F:ATP binding"/>
    <property type="evidence" value="ECO:0007669"/>
    <property type="project" value="UniProtKB-UniRule"/>
</dbReference>
<dbReference type="GO" id="GO:0044209">
    <property type="term" value="P:AMP salvage"/>
    <property type="evidence" value="ECO:0007669"/>
    <property type="project" value="UniProtKB-UniRule"/>
</dbReference>
<dbReference type="CDD" id="cd01428">
    <property type="entry name" value="ADK"/>
    <property type="match status" value="1"/>
</dbReference>
<dbReference type="FunFam" id="3.40.50.300:FF:000106">
    <property type="entry name" value="Adenylate kinase mitochondrial"/>
    <property type="match status" value="1"/>
</dbReference>
<dbReference type="Gene3D" id="3.40.50.300">
    <property type="entry name" value="P-loop containing nucleotide triphosphate hydrolases"/>
    <property type="match status" value="1"/>
</dbReference>
<dbReference type="HAMAP" id="MF_00235">
    <property type="entry name" value="Adenylate_kinase_Adk"/>
    <property type="match status" value="1"/>
</dbReference>
<dbReference type="InterPro" id="IPR006259">
    <property type="entry name" value="Adenyl_kin_sub"/>
</dbReference>
<dbReference type="InterPro" id="IPR000850">
    <property type="entry name" value="Adenylat/UMP-CMP_kin"/>
</dbReference>
<dbReference type="InterPro" id="IPR033690">
    <property type="entry name" value="Adenylat_kinase_CS"/>
</dbReference>
<dbReference type="InterPro" id="IPR007862">
    <property type="entry name" value="Adenylate_kinase_lid-dom"/>
</dbReference>
<dbReference type="InterPro" id="IPR027417">
    <property type="entry name" value="P-loop_NTPase"/>
</dbReference>
<dbReference type="NCBIfam" id="TIGR01351">
    <property type="entry name" value="adk"/>
    <property type="match status" value="1"/>
</dbReference>
<dbReference type="NCBIfam" id="NF001379">
    <property type="entry name" value="PRK00279.1-1"/>
    <property type="match status" value="1"/>
</dbReference>
<dbReference type="NCBIfam" id="NF001380">
    <property type="entry name" value="PRK00279.1-2"/>
    <property type="match status" value="1"/>
</dbReference>
<dbReference type="NCBIfam" id="NF001381">
    <property type="entry name" value="PRK00279.1-3"/>
    <property type="match status" value="1"/>
</dbReference>
<dbReference type="NCBIfam" id="NF011100">
    <property type="entry name" value="PRK14527.1"/>
    <property type="match status" value="1"/>
</dbReference>
<dbReference type="PANTHER" id="PTHR23359">
    <property type="entry name" value="NUCLEOTIDE KINASE"/>
    <property type="match status" value="1"/>
</dbReference>
<dbReference type="Pfam" id="PF00406">
    <property type="entry name" value="ADK"/>
    <property type="match status" value="1"/>
</dbReference>
<dbReference type="Pfam" id="PF05191">
    <property type="entry name" value="ADK_lid"/>
    <property type="match status" value="1"/>
</dbReference>
<dbReference type="PRINTS" id="PR00094">
    <property type="entry name" value="ADENYLTKNASE"/>
</dbReference>
<dbReference type="SUPFAM" id="SSF52540">
    <property type="entry name" value="P-loop containing nucleoside triphosphate hydrolases"/>
    <property type="match status" value="1"/>
</dbReference>
<dbReference type="PROSITE" id="PS00113">
    <property type="entry name" value="ADENYLATE_KINASE"/>
    <property type="match status" value="1"/>
</dbReference>
<sequence>MRIILLGAPGAGKGTQAQFIMEKYGIPQISTGDMLRAAVKAGSELGLKAKEIMDAGKLVTDELVIALVKERITQEDCRDGFLLDGFPRTIPQADAMKEAGIKVDYVLEFDVPDELIVERIVGRRVHAASGRVYHVKFNPPKVEDKDDVTGEELTIRKDDQEATVRKRLIEYHQQTAPLVSYYHKEADAGNTQYFKLDGTRNVAEVSAELATILG</sequence>
<keyword id="KW-0067">ATP-binding</keyword>
<keyword id="KW-0963">Cytoplasm</keyword>
<keyword id="KW-0418">Kinase</keyword>
<keyword id="KW-0545">Nucleotide biosynthesis</keyword>
<keyword id="KW-0547">Nucleotide-binding</keyword>
<keyword id="KW-0808">Transferase</keyword>
<accession>B1JHN1</accession>
<proteinExistence type="inferred from homology"/>
<reference key="1">
    <citation type="submission" date="2008-02" db="EMBL/GenBank/DDBJ databases">
        <title>Complete sequence of Yersinia pseudotuberculosis YPIII.</title>
        <authorList>
            <consortium name="US DOE Joint Genome Institute"/>
            <person name="Copeland A."/>
            <person name="Lucas S."/>
            <person name="Lapidus A."/>
            <person name="Glavina del Rio T."/>
            <person name="Dalin E."/>
            <person name="Tice H."/>
            <person name="Bruce D."/>
            <person name="Goodwin L."/>
            <person name="Pitluck S."/>
            <person name="Munk A.C."/>
            <person name="Brettin T."/>
            <person name="Detter J.C."/>
            <person name="Han C."/>
            <person name="Tapia R."/>
            <person name="Schmutz J."/>
            <person name="Larimer F."/>
            <person name="Land M."/>
            <person name="Hauser L."/>
            <person name="Challacombe J.F."/>
            <person name="Green L."/>
            <person name="Lindler L.E."/>
            <person name="Nikolich M.P."/>
            <person name="Richardson P."/>
        </authorList>
    </citation>
    <scope>NUCLEOTIDE SEQUENCE [LARGE SCALE GENOMIC DNA]</scope>
    <source>
        <strain>YPIII</strain>
    </source>
</reference>
<name>KAD_YERPY</name>
<evidence type="ECO:0000255" key="1">
    <source>
        <dbReference type="HAMAP-Rule" id="MF_00235"/>
    </source>
</evidence>
<gene>
    <name evidence="1" type="primary">adk</name>
    <name type="ordered locus">YPK_3194</name>
</gene>
<organism>
    <name type="scientific">Yersinia pseudotuberculosis serotype O:3 (strain YPIII)</name>
    <dbReference type="NCBI Taxonomy" id="502800"/>
    <lineage>
        <taxon>Bacteria</taxon>
        <taxon>Pseudomonadati</taxon>
        <taxon>Pseudomonadota</taxon>
        <taxon>Gammaproteobacteria</taxon>
        <taxon>Enterobacterales</taxon>
        <taxon>Yersiniaceae</taxon>
        <taxon>Yersinia</taxon>
    </lineage>
</organism>
<feature type="chain" id="PRO_1000100633" description="Adenylate kinase">
    <location>
        <begin position="1"/>
        <end position="214"/>
    </location>
</feature>
<feature type="region of interest" description="NMP" evidence="1">
    <location>
        <begin position="30"/>
        <end position="59"/>
    </location>
</feature>
<feature type="region of interest" description="LID">
    <location>
        <begin position="122"/>
        <end position="159"/>
    </location>
</feature>
<feature type="binding site" evidence="1">
    <location>
        <begin position="10"/>
        <end position="15"/>
    </location>
    <ligand>
        <name>ATP</name>
        <dbReference type="ChEBI" id="CHEBI:30616"/>
    </ligand>
</feature>
<feature type="binding site" evidence="1">
    <location>
        <position position="31"/>
    </location>
    <ligand>
        <name>AMP</name>
        <dbReference type="ChEBI" id="CHEBI:456215"/>
    </ligand>
</feature>
<feature type="binding site" evidence="1">
    <location>
        <position position="36"/>
    </location>
    <ligand>
        <name>AMP</name>
        <dbReference type="ChEBI" id="CHEBI:456215"/>
    </ligand>
</feature>
<feature type="binding site" evidence="1">
    <location>
        <begin position="57"/>
        <end position="59"/>
    </location>
    <ligand>
        <name>AMP</name>
        <dbReference type="ChEBI" id="CHEBI:456215"/>
    </ligand>
</feature>
<feature type="binding site" evidence="1">
    <location>
        <begin position="85"/>
        <end position="88"/>
    </location>
    <ligand>
        <name>AMP</name>
        <dbReference type="ChEBI" id="CHEBI:456215"/>
    </ligand>
</feature>
<feature type="binding site" evidence="1">
    <location>
        <position position="92"/>
    </location>
    <ligand>
        <name>AMP</name>
        <dbReference type="ChEBI" id="CHEBI:456215"/>
    </ligand>
</feature>
<feature type="binding site" evidence="1">
    <location>
        <position position="123"/>
    </location>
    <ligand>
        <name>ATP</name>
        <dbReference type="ChEBI" id="CHEBI:30616"/>
    </ligand>
</feature>
<feature type="binding site" evidence="1">
    <location>
        <begin position="132"/>
        <end position="133"/>
    </location>
    <ligand>
        <name>ATP</name>
        <dbReference type="ChEBI" id="CHEBI:30616"/>
    </ligand>
</feature>
<feature type="binding site" evidence="1">
    <location>
        <position position="156"/>
    </location>
    <ligand>
        <name>AMP</name>
        <dbReference type="ChEBI" id="CHEBI:456215"/>
    </ligand>
</feature>
<feature type="binding site" evidence="1">
    <location>
        <position position="167"/>
    </location>
    <ligand>
        <name>AMP</name>
        <dbReference type="ChEBI" id="CHEBI:456215"/>
    </ligand>
</feature>
<feature type="binding site" evidence="1">
    <location>
        <position position="200"/>
    </location>
    <ligand>
        <name>ATP</name>
        <dbReference type="ChEBI" id="CHEBI:30616"/>
    </ligand>
</feature>
<comment type="function">
    <text evidence="1">Catalyzes the reversible transfer of the terminal phosphate group between ATP and AMP. Plays an important role in cellular energy homeostasis and in adenine nucleotide metabolism.</text>
</comment>
<comment type="catalytic activity">
    <reaction evidence="1">
        <text>AMP + ATP = 2 ADP</text>
        <dbReference type="Rhea" id="RHEA:12973"/>
        <dbReference type="ChEBI" id="CHEBI:30616"/>
        <dbReference type="ChEBI" id="CHEBI:456215"/>
        <dbReference type="ChEBI" id="CHEBI:456216"/>
        <dbReference type="EC" id="2.7.4.3"/>
    </reaction>
</comment>
<comment type="pathway">
    <text evidence="1">Purine metabolism; AMP biosynthesis via salvage pathway; AMP from ADP: step 1/1.</text>
</comment>
<comment type="subunit">
    <text evidence="1">Monomer.</text>
</comment>
<comment type="subcellular location">
    <subcellularLocation>
        <location evidence="1">Cytoplasm</location>
    </subcellularLocation>
</comment>
<comment type="domain">
    <text evidence="1">Consists of three domains, a large central CORE domain and two small peripheral domains, NMPbind and LID, which undergo movements during catalysis. The LID domain closes over the site of phosphoryl transfer upon ATP binding. Assembling and dissambling the active center during each catalytic cycle provides an effective means to prevent ATP hydrolysis.</text>
</comment>
<comment type="similarity">
    <text evidence="1">Belongs to the adenylate kinase family.</text>
</comment>